<sequence length="678" mass="75263">MTKNLLVELGLEEIPAYIVTPAMHQLRDRMATFLTDNRLAFDSIDVFSTPRRLAVRVRGLADQQTDLTEDFKGPAKKIALDADGNFTKAAEGFVRGKGLTTADIEFREIKGEEYVYVTKHEAGQPAKTVLAGIPEVLKAMTFPVSMNWASNKFAYIRPVHTLTVLLDDEALDMDFLDITSGRISRGHRFLGNETEIASADSYEADLRAQFVITDPAERQNMIVEQIKAIEDKHNVTVEIDEDLLNEVLNLVEYPTAFMGSFDTKYLEVPEEVLVTSMKNHQRYFVVRDKAGKLLPNFISVRNGNDQYLDNVIKGNEKVLVARLEDGEFFWREDQKLKIADLVERLKVVTFHEKIGSLYEHMERTKVIAEKLADLAGLSAGEKADVARAADIYKFDLLTGMVGEFDELQGIMGEKYALLAGEKPAVAAAIREHYLPNSAEGELPESKVGAVLALADKFDTLLSFFSVGLIPSGSNDPYALRRATQGIVRILEAFGWEIPLDQLIAELYSLNFASLTYDNQPAVMDFIRARVEKMMDKTIPKDIREAVLASSTFVVRLQLAASSAIFQKAKEADYKEAVENLSRVFNLAEKAEVTAIDEALFENDQEKALAAAVAGLELTEDMAGNLDKLFALSPVIAAFFDNTMVMVDDATVKANRLALLKALADKASAVAVFNLLNSK</sequence>
<keyword id="KW-0030">Aminoacyl-tRNA synthetase</keyword>
<keyword id="KW-0067">ATP-binding</keyword>
<keyword id="KW-0963">Cytoplasm</keyword>
<keyword id="KW-0436">Ligase</keyword>
<keyword id="KW-0547">Nucleotide-binding</keyword>
<keyword id="KW-0648">Protein biosynthesis</keyword>
<protein>
    <recommendedName>
        <fullName evidence="1">Glycine--tRNA ligase beta subunit</fullName>
        <ecNumber evidence="1">6.1.1.14</ecNumber>
    </recommendedName>
    <alternativeName>
        <fullName evidence="1">Glycyl-tRNA synthetase beta subunit</fullName>
        <shortName evidence="1">GlyRS</shortName>
    </alternativeName>
</protein>
<reference key="1">
    <citation type="journal article" date="2007" name="PLoS ONE">
        <title>A glimpse of streptococcal toxic shock syndrome from comparative genomics of S. suis 2 Chinese isolates.</title>
        <authorList>
            <person name="Chen C."/>
            <person name="Tang J."/>
            <person name="Dong W."/>
            <person name="Wang C."/>
            <person name="Feng Y."/>
            <person name="Wang J."/>
            <person name="Zheng F."/>
            <person name="Pan X."/>
            <person name="Liu D."/>
            <person name="Li M."/>
            <person name="Song Y."/>
            <person name="Zhu X."/>
            <person name="Sun H."/>
            <person name="Feng T."/>
            <person name="Guo Z."/>
            <person name="Ju A."/>
            <person name="Ge J."/>
            <person name="Dong Y."/>
            <person name="Sun W."/>
            <person name="Jiang Y."/>
            <person name="Wang J."/>
            <person name="Yan J."/>
            <person name="Yang H."/>
            <person name="Wang X."/>
            <person name="Gao G.F."/>
            <person name="Yang R."/>
            <person name="Wang J."/>
            <person name="Yu J."/>
        </authorList>
    </citation>
    <scope>NUCLEOTIDE SEQUENCE [LARGE SCALE GENOMIC DNA]</scope>
    <source>
        <strain>05ZYH33</strain>
    </source>
</reference>
<evidence type="ECO:0000255" key="1">
    <source>
        <dbReference type="HAMAP-Rule" id="MF_00255"/>
    </source>
</evidence>
<organism>
    <name type="scientific">Streptococcus suis (strain 05ZYH33)</name>
    <dbReference type="NCBI Taxonomy" id="391295"/>
    <lineage>
        <taxon>Bacteria</taxon>
        <taxon>Bacillati</taxon>
        <taxon>Bacillota</taxon>
        <taxon>Bacilli</taxon>
        <taxon>Lactobacillales</taxon>
        <taxon>Streptococcaceae</taxon>
        <taxon>Streptococcus</taxon>
    </lineage>
</organism>
<accession>A4VX91</accession>
<proteinExistence type="inferred from homology"/>
<feature type="chain" id="PRO_1000101360" description="Glycine--tRNA ligase beta subunit">
    <location>
        <begin position="1"/>
        <end position="678"/>
    </location>
</feature>
<gene>
    <name evidence="1" type="primary">glyS</name>
    <name type="ordered locus">SSU05_1764</name>
</gene>
<comment type="catalytic activity">
    <reaction evidence="1">
        <text>tRNA(Gly) + glycine + ATP = glycyl-tRNA(Gly) + AMP + diphosphate</text>
        <dbReference type="Rhea" id="RHEA:16013"/>
        <dbReference type="Rhea" id="RHEA-COMP:9664"/>
        <dbReference type="Rhea" id="RHEA-COMP:9683"/>
        <dbReference type="ChEBI" id="CHEBI:30616"/>
        <dbReference type="ChEBI" id="CHEBI:33019"/>
        <dbReference type="ChEBI" id="CHEBI:57305"/>
        <dbReference type="ChEBI" id="CHEBI:78442"/>
        <dbReference type="ChEBI" id="CHEBI:78522"/>
        <dbReference type="ChEBI" id="CHEBI:456215"/>
        <dbReference type="EC" id="6.1.1.14"/>
    </reaction>
</comment>
<comment type="subunit">
    <text evidence="1">Tetramer of two alpha and two beta subunits.</text>
</comment>
<comment type="subcellular location">
    <subcellularLocation>
        <location evidence="1">Cytoplasm</location>
    </subcellularLocation>
</comment>
<comment type="similarity">
    <text evidence="1">Belongs to the class-II aminoacyl-tRNA synthetase family.</text>
</comment>
<name>SYGB_STRSY</name>
<dbReference type="EC" id="6.1.1.14" evidence="1"/>
<dbReference type="EMBL" id="CP000407">
    <property type="protein sequence ID" value="ABP90730.1"/>
    <property type="molecule type" value="Genomic_DNA"/>
</dbReference>
<dbReference type="SMR" id="A4VX91"/>
<dbReference type="STRING" id="391295.SSU05_1764"/>
<dbReference type="KEGG" id="ssu:SSU05_1764"/>
<dbReference type="eggNOG" id="COG0751">
    <property type="taxonomic scope" value="Bacteria"/>
</dbReference>
<dbReference type="HOGENOM" id="CLU_007220_2_2_9"/>
<dbReference type="GO" id="GO:0005829">
    <property type="term" value="C:cytosol"/>
    <property type="evidence" value="ECO:0007669"/>
    <property type="project" value="TreeGrafter"/>
</dbReference>
<dbReference type="GO" id="GO:0004814">
    <property type="term" value="F:arginine-tRNA ligase activity"/>
    <property type="evidence" value="ECO:0007669"/>
    <property type="project" value="InterPro"/>
</dbReference>
<dbReference type="GO" id="GO:0005524">
    <property type="term" value="F:ATP binding"/>
    <property type="evidence" value="ECO:0007669"/>
    <property type="project" value="UniProtKB-UniRule"/>
</dbReference>
<dbReference type="GO" id="GO:0004820">
    <property type="term" value="F:glycine-tRNA ligase activity"/>
    <property type="evidence" value="ECO:0007669"/>
    <property type="project" value="UniProtKB-UniRule"/>
</dbReference>
<dbReference type="GO" id="GO:0006420">
    <property type="term" value="P:arginyl-tRNA aminoacylation"/>
    <property type="evidence" value="ECO:0007669"/>
    <property type="project" value="InterPro"/>
</dbReference>
<dbReference type="GO" id="GO:0006426">
    <property type="term" value="P:glycyl-tRNA aminoacylation"/>
    <property type="evidence" value="ECO:0007669"/>
    <property type="project" value="UniProtKB-UniRule"/>
</dbReference>
<dbReference type="HAMAP" id="MF_00255">
    <property type="entry name" value="Gly_tRNA_synth_beta"/>
    <property type="match status" value="1"/>
</dbReference>
<dbReference type="InterPro" id="IPR008909">
    <property type="entry name" value="DALR_anticod-bd"/>
</dbReference>
<dbReference type="InterPro" id="IPR015944">
    <property type="entry name" value="Gly-tRNA-synth_bsu"/>
</dbReference>
<dbReference type="InterPro" id="IPR006194">
    <property type="entry name" value="Gly-tRNA-synth_heterodimer"/>
</dbReference>
<dbReference type="NCBIfam" id="TIGR00211">
    <property type="entry name" value="glyS"/>
    <property type="match status" value="1"/>
</dbReference>
<dbReference type="PANTHER" id="PTHR30075:SF2">
    <property type="entry name" value="GLYCINE--TRNA LIGASE, CHLOROPLASTIC_MITOCHONDRIAL 2"/>
    <property type="match status" value="1"/>
</dbReference>
<dbReference type="PANTHER" id="PTHR30075">
    <property type="entry name" value="GLYCYL-TRNA SYNTHETASE"/>
    <property type="match status" value="1"/>
</dbReference>
<dbReference type="Pfam" id="PF05746">
    <property type="entry name" value="DALR_1"/>
    <property type="match status" value="1"/>
</dbReference>
<dbReference type="Pfam" id="PF02092">
    <property type="entry name" value="tRNA_synt_2f"/>
    <property type="match status" value="1"/>
</dbReference>
<dbReference type="PRINTS" id="PR01045">
    <property type="entry name" value="TRNASYNTHGB"/>
</dbReference>
<dbReference type="SUPFAM" id="SSF109604">
    <property type="entry name" value="HD-domain/PDEase-like"/>
    <property type="match status" value="1"/>
</dbReference>
<dbReference type="PROSITE" id="PS50861">
    <property type="entry name" value="AA_TRNA_LIGASE_II_GLYAB"/>
    <property type="match status" value="1"/>
</dbReference>